<feature type="chain" id="PRO_0000408568" description="Outer kinetochore KNL1 complex subunit KRE28">
    <location>
        <begin position="1"/>
        <end position="385"/>
    </location>
</feature>
<feature type="coiled-coil region" evidence="2">
    <location>
        <begin position="128"/>
        <end position="175"/>
    </location>
</feature>
<feature type="coiled-coil region" evidence="2">
    <location>
        <begin position="229"/>
        <end position="258"/>
    </location>
</feature>
<dbReference type="EMBL" id="AAFW02000145">
    <property type="protein sequence ID" value="EDN60849.1"/>
    <property type="molecule type" value="Genomic_DNA"/>
</dbReference>
<dbReference type="SMR" id="A6ZZB9"/>
<dbReference type="HOGENOM" id="CLU_062083_0_0_1"/>
<dbReference type="Proteomes" id="UP000007060">
    <property type="component" value="Unassembled WGS sequence"/>
</dbReference>
<dbReference type="GO" id="GO:0000776">
    <property type="term" value="C:kinetochore"/>
    <property type="evidence" value="ECO:0000250"/>
    <property type="project" value="UniProtKB"/>
</dbReference>
<dbReference type="GO" id="GO:0180019">
    <property type="term" value="C:Knl1/Spc105 complex"/>
    <property type="evidence" value="ECO:0000250"/>
    <property type="project" value="UniProtKB"/>
</dbReference>
<dbReference type="GO" id="GO:0005634">
    <property type="term" value="C:nucleus"/>
    <property type="evidence" value="ECO:0007669"/>
    <property type="project" value="UniProtKB-SubCell"/>
</dbReference>
<dbReference type="GO" id="GO:0031619">
    <property type="term" value="P:homologous chromosome orientation in meiotic metaphase I"/>
    <property type="evidence" value="ECO:0000250"/>
    <property type="project" value="UniProtKB"/>
</dbReference>
<dbReference type="GO" id="GO:1905325">
    <property type="term" value="P:regulation of meiosis I spindle assembly checkpoint"/>
    <property type="evidence" value="ECO:0000250"/>
    <property type="project" value="UniProtKB"/>
</dbReference>
<dbReference type="InterPro" id="IPR031361">
    <property type="entry name" value="Kre28"/>
</dbReference>
<dbReference type="Pfam" id="PF17097">
    <property type="entry name" value="Kre28"/>
    <property type="match status" value="1"/>
</dbReference>
<keyword id="KW-0137">Centromere</keyword>
<keyword id="KW-0158">Chromosome</keyword>
<keyword id="KW-0175">Coiled coil</keyword>
<keyword id="KW-0995">Kinetochore</keyword>
<keyword id="KW-0539">Nucleus</keyword>
<reference key="1">
    <citation type="journal article" date="2007" name="Proc. Natl. Acad. Sci. U.S.A.">
        <title>Genome sequencing and comparative analysis of Saccharomyces cerevisiae strain YJM789.</title>
        <authorList>
            <person name="Wei W."/>
            <person name="McCusker J.H."/>
            <person name="Hyman R.W."/>
            <person name="Jones T."/>
            <person name="Ning Y."/>
            <person name="Cao Z."/>
            <person name="Gu Z."/>
            <person name="Bruno D."/>
            <person name="Miranda M."/>
            <person name="Nguyen M."/>
            <person name="Wilhelmy J."/>
            <person name="Komp C."/>
            <person name="Tamse R."/>
            <person name="Wang X."/>
            <person name="Jia P."/>
            <person name="Luedi P."/>
            <person name="Oefner P.J."/>
            <person name="David L."/>
            <person name="Dietrich F.S."/>
            <person name="Li Y."/>
            <person name="Davis R.W."/>
            <person name="Steinmetz L.M."/>
        </authorList>
    </citation>
    <scope>NUCLEOTIDE SEQUENCE [LARGE SCALE GENOMIC DNA]</scope>
    <source>
        <strain>YJM789</strain>
    </source>
</reference>
<protein>
    <recommendedName>
        <fullName evidence="3">Outer kinetochore KNL1 complex subunit KRE28</fullName>
    </recommendedName>
    <alternativeName>
        <fullName>Spindle pole body component KRE28</fullName>
    </alternativeName>
</protein>
<name>ZWINT_YEAS7</name>
<sequence length="385" mass="44674">MDTGSASIKDYETVLTDIEDSIAVSSEEVLNNQELRLKNTLHEITSSILAINEENKFVNPLRNDESLDVEGKEVFVNPKILSAKIKEFNKLMELLKLTYLEQETLDYFFRFTLSSTKPLQLDSEKDPQFVKLNERVNDLKEEISNVQESKIEQIKAEIQETGHNFAEKQDLINELYLEATGDIENCWDSLNELKNLTNKEDKNMMGEKDTILNSSDSDDFVEETYTNWQKLLFLQKQNQRLTKELKEMHEVKNQIIRKGEQSKKEDSGHLMANESELCQSINLLTKFWEKHFLLKGSKTTILNFEIFTQLGKVQFEIKDMQYIIAISLSDLKRPMIKDITILQKAGGNIVTDIEANSKFNNKYRNNTKVQIFEVMDDIISELTNE</sequence>
<gene>
    <name type="primary">KRE28</name>
    <name type="ORF">SCY_1408</name>
</gene>
<evidence type="ECO:0000250" key="1">
    <source>
        <dbReference type="UniProtKB" id="Q04431"/>
    </source>
</evidence>
<evidence type="ECO:0000255" key="2"/>
<evidence type="ECO:0000305" key="3"/>
<accession>A6ZZB9</accession>
<comment type="function">
    <text evidence="1">Acts as a component of the outer kinetochore KNL1 complex that facilitates microtubule-kinetochore interactions and the spindle assembly checkpoint. Kinetochores, consisting of a centromere-associated inner segment and a microtubule-contacting outer segment, play a crucial role in chromosome segregation by mediating the physical connection between centromeric DNA and spindle microtubules. The outer kinetochore is made up of the ten-subunit KMN network, comprising the MIS12, NDC80 and KNL1 complexes, and auxiliary microtubule-associated components; together they connect the outer kinetochore with the inner kinetochore, bind microtubules, and mediate interactions with mitotic checkpoint proteins that delay anaphase until chromosomes are bioriented on the spindle. The KNL1 complex is required for kinetochore binding by the kMAPs (kinetochore-bound microtubule-associated proteins) BIM1, BIK1 and SLK19, and motors CIN8 and KAR3. Required during meiosis.</text>
</comment>
<comment type="subunit">
    <text evidence="1">Component of the KNL1/SPC105 complex composed of SPC105 and KRE28. Part of the ten-subunit outer kinetochore KMN network that includes the KNL1, MIS12 and NDC80 complexes. Interacts with the MIS12 complex subunits MTW1 (via C-terminus) and NSL1 (via C-terminus). Interacts with the NDC80 complex subunits SPC24 and SPC25. Interacts with CNN1 (via N-terminus).</text>
</comment>
<comment type="subcellular location">
    <subcellularLocation>
        <location evidence="1">Nucleus</location>
    </subcellularLocation>
    <subcellularLocation>
        <location evidence="1">Chromosome</location>
        <location evidence="1">Centromere</location>
        <location evidence="1">Kinetochore</location>
    </subcellularLocation>
</comment>
<comment type="similarity">
    <text evidence="3">Belongs to the KRE28 family.</text>
</comment>
<proteinExistence type="inferred from homology"/>
<organism>
    <name type="scientific">Saccharomyces cerevisiae (strain YJM789)</name>
    <name type="common">Baker's yeast</name>
    <dbReference type="NCBI Taxonomy" id="307796"/>
    <lineage>
        <taxon>Eukaryota</taxon>
        <taxon>Fungi</taxon>
        <taxon>Dikarya</taxon>
        <taxon>Ascomycota</taxon>
        <taxon>Saccharomycotina</taxon>
        <taxon>Saccharomycetes</taxon>
        <taxon>Saccharomycetales</taxon>
        <taxon>Saccharomycetaceae</taxon>
        <taxon>Saccharomyces</taxon>
    </lineage>
</organism>